<protein>
    <recommendedName>
        <fullName evidence="1">Small ribosomal subunit protein uS7</fullName>
    </recommendedName>
    <alternativeName>
        <fullName evidence="2">30S ribosomal protein S7</fullName>
    </alternativeName>
</protein>
<keyword id="KW-1185">Reference proteome</keyword>
<keyword id="KW-0687">Ribonucleoprotein</keyword>
<keyword id="KW-0689">Ribosomal protein</keyword>
<keyword id="KW-0694">RNA-binding</keyword>
<keyword id="KW-0699">rRNA-binding</keyword>
<keyword id="KW-0820">tRNA-binding</keyword>
<reference key="1">
    <citation type="journal article" date="2009" name="J. Bacteriol.">
        <title>The genome of Thermosipho africanus TCF52B: lateral genetic connections to the Firmicutes and Archaea.</title>
        <authorList>
            <person name="Nesboe C.L."/>
            <person name="Bapteste E."/>
            <person name="Curtis B."/>
            <person name="Dahle H."/>
            <person name="Lopez P."/>
            <person name="Macleod D."/>
            <person name="Dlutek M."/>
            <person name="Bowman S."/>
            <person name="Zhaxybayeva O."/>
            <person name="Birkeland N.-K."/>
            <person name="Doolittle W.F."/>
        </authorList>
    </citation>
    <scope>NUCLEOTIDE SEQUENCE [LARGE SCALE GENOMIC DNA]</scope>
    <source>
        <strain>TCF52B</strain>
    </source>
</reference>
<dbReference type="EMBL" id="CP001185">
    <property type="protein sequence ID" value="ACJ75656.1"/>
    <property type="molecule type" value="Genomic_DNA"/>
</dbReference>
<dbReference type="RefSeq" id="WP_004101430.1">
    <property type="nucleotide sequence ID" value="NC_011653.1"/>
</dbReference>
<dbReference type="SMR" id="B7IHU2"/>
<dbReference type="STRING" id="484019.THA_1211"/>
<dbReference type="KEGG" id="taf:THA_1211"/>
<dbReference type="eggNOG" id="COG0049">
    <property type="taxonomic scope" value="Bacteria"/>
</dbReference>
<dbReference type="HOGENOM" id="CLU_072226_1_1_0"/>
<dbReference type="OrthoDB" id="9807653at2"/>
<dbReference type="Proteomes" id="UP000002453">
    <property type="component" value="Chromosome"/>
</dbReference>
<dbReference type="GO" id="GO:0015935">
    <property type="term" value="C:small ribosomal subunit"/>
    <property type="evidence" value="ECO:0007669"/>
    <property type="project" value="InterPro"/>
</dbReference>
<dbReference type="GO" id="GO:0019843">
    <property type="term" value="F:rRNA binding"/>
    <property type="evidence" value="ECO:0007669"/>
    <property type="project" value="UniProtKB-UniRule"/>
</dbReference>
<dbReference type="GO" id="GO:0003735">
    <property type="term" value="F:structural constituent of ribosome"/>
    <property type="evidence" value="ECO:0007669"/>
    <property type="project" value="InterPro"/>
</dbReference>
<dbReference type="GO" id="GO:0000049">
    <property type="term" value="F:tRNA binding"/>
    <property type="evidence" value="ECO:0007669"/>
    <property type="project" value="UniProtKB-UniRule"/>
</dbReference>
<dbReference type="GO" id="GO:0006412">
    <property type="term" value="P:translation"/>
    <property type="evidence" value="ECO:0007669"/>
    <property type="project" value="UniProtKB-UniRule"/>
</dbReference>
<dbReference type="CDD" id="cd14869">
    <property type="entry name" value="uS7_Bacteria"/>
    <property type="match status" value="1"/>
</dbReference>
<dbReference type="FunFam" id="1.10.455.10:FF:000001">
    <property type="entry name" value="30S ribosomal protein S7"/>
    <property type="match status" value="1"/>
</dbReference>
<dbReference type="Gene3D" id="1.10.455.10">
    <property type="entry name" value="Ribosomal protein S7 domain"/>
    <property type="match status" value="1"/>
</dbReference>
<dbReference type="HAMAP" id="MF_00480_B">
    <property type="entry name" value="Ribosomal_uS7_B"/>
    <property type="match status" value="1"/>
</dbReference>
<dbReference type="InterPro" id="IPR000235">
    <property type="entry name" value="Ribosomal_uS7"/>
</dbReference>
<dbReference type="InterPro" id="IPR005717">
    <property type="entry name" value="Ribosomal_uS7_bac/org-type"/>
</dbReference>
<dbReference type="InterPro" id="IPR020606">
    <property type="entry name" value="Ribosomal_uS7_CS"/>
</dbReference>
<dbReference type="InterPro" id="IPR023798">
    <property type="entry name" value="Ribosomal_uS7_dom"/>
</dbReference>
<dbReference type="InterPro" id="IPR036823">
    <property type="entry name" value="Ribosomal_uS7_dom_sf"/>
</dbReference>
<dbReference type="NCBIfam" id="TIGR01029">
    <property type="entry name" value="rpsG_bact"/>
    <property type="match status" value="1"/>
</dbReference>
<dbReference type="PANTHER" id="PTHR11205">
    <property type="entry name" value="RIBOSOMAL PROTEIN S7"/>
    <property type="match status" value="1"/>
</dbReference>
<dbReference type="Pfam" id="PF00177">
    <property type="entry name" value="Ribosomal_S7"/>
    <property type="match status" value="1"/>
</dbReference>
<dbReference type="PIRSF" id="PIRSF002122">
    <property type="entry name" value="RPS7p_RPS7a_RPS5e_RPS7o"/>
    <property type="match status" value="1"/>
</dbReference>
<dbReference type="SUPFAM" id="SSF47973">
    <property type="entry name" value="Ribosomal protein S7"/>
    <property type="match status" value="1"/>
</dbReference>
<dbReference type="PROSITE" id="PS00052">
    <property type="entry name" value="RIBOSOMAL_S7"/>
    <property type="match status" value="1"/>
</dbReference>
<feature type="chain" id="PRO_1000126014" description="Small ribosomal subunit protein uS7">
    <location>
        <begin position="1"/>
        <end position="155"/>
    </location>
</feature>
<comment type="function">
    <text evidence="1">One of the primary rRNA binding proteins, it binds directly to 16S rRNA where it nucleates assembly of the head domain of the 30S subunit. Is located at the subunit interface close to the decoding center, probably blocks exit of the E-site tRNA.</text>
</comment>
<comment type="subunit">
    <text evidence="1">Part of the 30S ribosomal subunit. Contacts proteins S9 and S11.</text>
</comment>
<comment type="similarity">
    <text evidence="1">Belongs to the universal ribosomal protein uS7 family.</text>
</comment>
<accession>B7IHU2</accession>
<evidence type="ECO:0000255" key="1">
    <source>
        <dbReference type="HAMAP-Rule" id="MF_00480"/>
    </source>
</evidence>
<evidence type="ECO:0000305" key="2"/>
<sequence>MRRRRAEVRKVPPDPIYNDVLVSKLINRVMWDGKKSIAQKIVYKAMEYLSEKTKKDPLEALHQAIDNVRPLVEVRPRRVGGATYQVPIEVEEPRKTSLALRWIVEAARSKKGRPMAEKLGEELVNAFNNTGTAIKKKEDVHRMAEANRAFAHFRW</sequence>
<name>RS7_THEAB</name>
<organism>
    <name type="scientific">Thermosipho africanus (strain TCF52B)</name>
    <dbReference type="NCBI Taxonomy" id="484019"/>
    <lineage>
        <taxon>Bacteria</taxon>
        <taxon>Thermotogati</taxon>
        <taxon>Thermotogota</taxon>
        <taxon>Thermotogae</taxon>
        <taxon>Thermotogales</taxon>
        <taxon>Fervidobacteriaceae</taxon>
        <taxon>Thermosipho</taxon>
    </lineage>
</organism>
<gene>
    <name evidence="1" type="primary">rpsG</name>
    <name type="ordered locus">THA_1211</name>
</gene>
<proteinExistence type="inferred from homology"/>